<sequence length="370" mass="37740">MALSAEGSSGGSRGGSPKAEAASVPSWPQILGRLTDNRDLARGQAAWAMDQIMTGNARPAQIAAFAVAMTMKAPTADEVGELAGVMLSHAHPLPADTVPDDAVDVVGTGGDGVNTVNLSTMAAIVVAAAGVPVVKHGNRAASSLSGGADTLEALGVRIDLGPDLVARSLAEVGIGFCFAPRFHPSYRHAAAVRREIGVPTVFNLLGPLTNPARPRAGLIGCAFADLAEVMAGVFAARRSSVLVVHGDDGLDELTTTTTSTIWRVAAGSVDKLTFDPAGFGFARAQLDQLAGGDAQANAAAVRAVLGGARGPVRDAVVLNAAGAIVAHAGLSSRAEWLPAWEEGLRRASAAIDTGAAEQLLARWVRFGRQI</sequence>
<name>TRPD_MYCBP</name>
<feature type="chain" id="PRO_1000043035" description="Anthranilate phosphoribosyltransferase">
    <location>
        <begin position="1"/>
        <end position="370"/>
    </location>
</feature>
<feature type="region of interest" description="Disordered" evidence="2">
    <location>
        <begin position="1"/>
        <end position="27"/>
    </location>
</feature>
<feature type="binding site" evidence="1">
    <location>
        <position position="107"/>
    </location>
    <ligand>
        <name>5-phospho-alpha-D-ribose 1-diphosphate</name>
        <dbReference type="ChEBI" id="CHEBI:58017"/>
    </ligand>
</feature>
<feature type="binding site" evidence="1">
    <location>
        <position position="107"/>
    </location>
    <ligand>
        <name>anthranilate</name>
        <dbReference type="ChEBI" id="CHEBI:16567"/>
        <label>1</label>
    </ligand>
</feature>
<feature type="binding site" evidence="1">
    <location>
        <begin position="110"/>
        <end position="111"/>
    </location>
    <ligand>
        <name>5-phospho-alpha-D-ribose 1-diphosphate</name>
        <dbReference type="ChEBI" id="CHEBI:58017"/>
    </ligand>
</feature>
<feature type="binding site" evidence="1">
    <location>
        <position position="115"/>
    </location>
    <ligand>
        <name>5-phospho-alpha-D-ribose 1-diphosphate</name>
        <dbReference type="ChEBI" id="CHEBI:58017"/>
    </ligand>
</feature>
<feature type="binding site" evidence="1">
    <location>
        <begin position="117"/>
        <end position="120"/>
    </location>
    <ligand>
        <name>5-phospho-alpha-D-ribose 1-diphosphate</name>
        <dbReference type="ChEBI" id="CHEBI:58017"/>
    </ligand>
</feature>
<feature type="binding site" evidence="1">
    <location>
        <position position="119"/>
    </location>
    <ligand>
        <name>Mg(2+)</name>
        <dbReference type="ChEBI" id="CHEBI:18420"/>
        <label>1</label>
    </ligand>
</feature>
<feature type="binding site" evidence="1">
    <location>
        <begin position="135"/>
        <end position="143"/>
    </location>
    <ligand>
        <name>5-phospho-alpha-D-ribose 1-diphosphate</name>
        <dbReference type="ChEBI" id="CHEBI:58017"/>
    </ligand>
</feature>
<feature type="binding site" evidence="1">
    <location>
        <position position="138"/>
    </location>
    <ligand>
        <name>anthranilate</name>
        <dbReference type="ChEBI" id="CHEBI:16567"/>
        <label>1</label>
    </ligand>
</feature>
<feature type="binding site" evidence="1">
    <location>
        <position position="147"/>
    </location>
    <ligand>
        <name>5-phospho-alpha-D-ribose 1-diphosphate</name>
        <dbReference type="ChEBI" id="CHEBI:58017"/>
    </ligand>
</feature>
<feature type="binding site" evidence="1">
    <location>
        <position position="193"/>
    </location>
    <ligand>
        <name>anthranilate</name>
        <dbReference type="ChEBI" id="CHEBI:16567"/>
        <label>2</label>
    </ligand>
</feature>
<feature type="binding site" evidence="1">
    <location>
        <position position="251"/>
    </location>
    <ligand>
        <name>Mg(2+)</name>
        <dbReference type="ChEBI" id="CHEBI:18420"/>
        <label>2</label>
    </ligand>
</feature>
<feature type="binding site" evidence="1">
    <location>
        <position position="252"/>
    </location>
    <ligand>
        <name>Mg(2+)</name>
        <dbReference type="ChEBI" id="CHEBI:18420"/>
        <label>1</label>
    </ligand>
</feature>
<feature type="binding site" evidence="1">
    <location>
        <position position="252"/>
    </location>
    <ligand>
        <name>Mg(2+)</name>
        <dbReference type="ChEBI" id="CHEBI:18420"/>
        <label>2</label>
    </ligand>
</feature>
<keyword id="KW-0028">Amino-acid biosynthesis</keyword>
<keyword id="KW-0057">Aromatic amino acid biosynthesis</keyword>
<keyword id="KW-0328">Glycosyltransferase</keyword>
<keyword id="KW-0460">Magnesium</keyword>
<keyword id="KW-0479">Metal-binding</keyword>
<keyword id="KW-0808">Transferase</keyword>
<keyword id="KW-0822">Tryptophan biosynthesis</keyword>
<reference key="1">
    <citation type="journal article" date="2007" name="Proc. Natl. Acad. Sci. U.S.A.">
        <title>Genome plasticity of BCG and impact on vaccine efficacy.</title>
        <authorList>
            <person name="Brosch R."/>
            <person name="Gordon S.V."/>
            <person name="Garnier T."/>
            <person name="Eiglmeier K."/>
            <person name="Frigui W."/>
            <person name="Valenti P."/>
            <person name="Dos Santos S."/>
            <person name="Duthoy S."/>
            <person name="Lacroix C."/>
            <person name="Garcia-Pelayo C."/>
            <person name="Inwald J.K."/>
            <person name="Golby P."/>
            <person name="Garcia J.N."/>
            <person name="Hewinson R.G."/>
            <person name="Behr M.A."/>
            <person name="Quail M.A."/>
            <person name="Churcher C."/>
            <person name="Barrell B.G."/>
            <person name="Parkhill J."/>
            <person name="Cole S.T."/>
        </authorList>
    </citation>
    <scope>NUCLEOTIDE SEQUENCE [LARGE SCALE GENOMIC DNA]</scope>
    <source>
        <strain>BCG / Pasteur 1173P2</strain>
    </source>
</reference>
<evidence type="ECO:0000255" key="1">
    <source>
        <dbReference type="HAMAP-Rule" id="MF_00211"/>
    </source>
</evidence>
<evidence type="ECO:0000256" key="2">
    <source>
        <dbReference type="SAM" id="MobiDB-lite"/>
    </source>
</evidence>
<proteinExistence type="inferred from homology"/>
<organism>
    <name type="scientific">Mycobacterium bovis (strain BCG / Pasteur 1173P2)</name>
    <dbReference type="NCBI Taxonomy" id="410289"/>
    <lineage>
        <taxon>Bacteria</taxon>
        <taxon>Bacillati</taxon>
        <taxon>Actinomycetota</taxon>
        <taxon>Actinomycetes</taxon>
        <taxon>Mycobacteriales</taxon>
        <taxon>Mycobacteriaceae</taxon>
        <taxon>Mycobacterium</taxon>
        <taxon>Mycobacterium tuberculosis complex</taxon>
    </lineage>
</organism>
<dbReference type="EC" id="2.4.2.18" evidence="1"/>
<dbReference type="EMBL" id="AM408590">
    <property type="protein sequence ID" value="CAL72196.1"/>
    <property type="molecule type" value="Genomic_DNA"/>
</dbReference>
<dbReference type="RefSeq" id="WP_003411387.1">
    <property type="nucleotide sequence ID" value="NC_008769.1"/>
</dbReference>
<dbReference type="SMR" id="A1KKN4"/>
<dbReference type="GeneID" id="45427983"/>
<dbReference type="KEGG" id="mbb:BCG_2208c"/>
<dbReference type="HOGENOM" id="CLU_034315_4_1_11"/>
<dbReference type="UniPathway" id="UPA00035">
    <property type="reaction ID" value="UER00041"/>
</dbReference>
<dbReference type="Proteomes" id="UP000001472">
    <property type="component" value="Chromosome"/>
</dbReference>
<dbReference type="GO" id="GO:0005829">
    <property type="term" value="C:cytosol"/>
    <property type="evidence" value="ECO:0007669"/>
    <property type="project" value="TreeGrafter"/>
</dbReference>
<dbReference type="GO" id="GO:0004048">
    <property type="term" value="F:anthranilate phosphoribosyltransferase activity"/>
    <property type="evidence" value="ECO:0007669"/>
    <property type="project" value="UniProtKB-UniRule"/>
</dbReference>
<dbReference type="GO" id="GO:0000287">
    <property type="term" value="F:magnesium ion binding"/>
    <property type="evidence" value="ECO:0007669"/>
    <property type="project" value="UniProtKB-UniRule"/>
</dbReference>
<dbReference type="GO" id="GO:0000162">
    <property type="term" value="P:L-tryptophan biosynthetic process"/>
    <property type="evidence" value="ECO:0007669"/>
    <property type="project" value="UniProtKB-UniRule"/>
</dbReference>
<dbReference type="FunFam" id="1.20.970.10:FF:000006">
    <property type="entry name" value="Anthranilate phosphoribosyltransferase"/>
    <property type="match status" value="1"/>
</dbReference>
<dbReference type="FunFam" id="3.40.1030.10:FF:000002">
    <property type="entry name" value="Anthranilate phosphoribosyltransferase"/>
    <property type="match status" value="1"/>
</dbReference>
<dbReference type="Gene3D" id="3.40.1030.10">
    <property type="entry name" value="Nucleoside phosphorylase/phosphoribosyltransferase catalytic domain"/>
    <property type="match status" value="1"/>
</dbReference>
<dbReference type="Gene3D" id="1.20.970.10">
    <property type="entry name" value="Transferase, Pyrimidine Nucleoside Phosphorylase, Chain C"/>
    <property type="match status" value="1"/>
</dbReference>
<dbReference type="HAMAP" id="MF_00211">
    <property type="entry name" value="TrpD"/>
    <property type="match status" value="1"/>
</dbReference>
<dbReference type="InterPro" id="IPR005940">
    <property type="entry name" value="Anthranilate_Pribosyl_Tfrase"/>
</dbReference>
<dbReference type="InterPro" id="IPR000312">
    <property type="entry name" value="Glycosyl_Trfase_fam3"/>
</dbReference>
<dbReference type="InterPro" id="IPR017459">
    <property type="entry name" value="Glycosyl_Trfase_fam3_N_dom"/>
</dbReference>
<dbReference type="InterPro" id="IPR036320">
    <property type="entry name" value="Glycosyl_Trfase_fam3_N_dom_sf"/>
</dbReference>
<dbReference type="InterPro" id="IPR035902">
    <property type="entry name" value="Nuc_phospho_transferase"/>
</dbReference>
<dbReference type="NCBIfam" id="TIGR01245">
    <property type="entry name" value="trpD"/>
    <property type="match status" value="1"/>
</dbReference>
<dbReference type="PANTHER" id="PTHR43285">
    <property type="entry name" value="ANTHRANILATE PHOSPHORIBOSYLTRANSFERASE"/>
    <property type="match status" value="1"/>
</dbReference>
<dbReference type="PANTHER" id="PTHR43285:SF2">
    <property type="entry name" value="ANTHRANILATE PHOSPHORIBOSYLTRANSFERASE"/>
    <property type="match status" value="1"/>
</dbReference>
<dbReference type="Pfam" id="PF02885">
    <property type="entry name" value="Glycos_trans_3N"/>
    <property type="match status" value="1"/>
</dbReference>
<dbReference type="Pfam" id="PF00591">
    <property type="entry name" value="Glycos_transf_3"/>
    <property type="match status" value="1"/>
</dbReference>
<dbReference type="SUPFAM" id="SSF52418">
    <property type="entry name" value="Nucleoside phosphorylase/phosphoribosyltransferase catalytic domain"/>
    <property type="match status" value="1"/>
</dbReference>
<dbReference type="SUPFAM" id="SSF47648">
    <property type="entry name" value="Nucleoside phosphorylase/phosphoribosyltransferase N-terminal domain"/>
    <property type="match status" value="1"/>
</dbReference>
<comment type="function">
    <text evidence="1">Catalyzes the transfer of the phosphoribosyl group of 5-phosphorylribose-1-pyrophosphate (PRPP) to anthranilate to yield N-(5'-phosphoribosyl)-anthranilate (PRA).</text>
</comment>
<comment type="catalytic activity">
    <reaction evidence="1">
        <text>N-(5-phospho-beta-D-ribosyl)anthranilate + diphosphate = 5-phospho-alpha-D-ribose 1-diphosphate + anthranilate</text>
        <dbReference type="Rhea" id="RHEA:11768"/>
        <dbReference type="ChEBI" id="CHEBI:16567"/>
        <dbReference type="ChEBI" id="CHEBI:18277"/>
        <dbReference type="ChEBI" id="CHEBI:33019"/>
        <dbReference type="ChEBI" id="CHEBI:58017"/>
        <dbReference type="EC" id="2.4.2.18"/>
    </reaction>
</comment>
<comment type="cofactor">
    <cofactor evidence="1">
        <name>Mg(2+)</name>
        <dbReference type="ChEBI" id="CHEBI:18420"/>
    </cofactor>
    <text evidence="1">Binds 2 magnesium ions per monomer.</text>
</comment>
<comment type="pathway">
    <text evidence="1">Amino-acid biosynthesis; L-tryptophan biosynthesis; L-tryptophan from chorismate: step 2/5.</text>
</comment>
<comment type="subunit">
    <text evidence="1">Homodimer.</text>
</comment>
<comment type="similarity">
    <text evidence="1">Belongs to the anthranilate phosphoribosyltransferase family.</text>
</comment>
<accession>A1KKN4</accession>
<protein>
    <recommendedName>
        <fullName evidence="1">Anthranilate phosphoribosyltransferase</fullName>
        <ecNumber evidence="1">2.4.2.18</ecNumber>
    </recommendedName>
</protein>
<gene>
    <name evidence="1" type="primary">trpD</name>
    <name type="ordered locus">BCG_2208c</name>
</gene>